<keyword id="KW-0028">Amino-acid biosynthesis</keyword>
<keyword id="KW-0963">Cytoplasm</keyword>
<keyword id="KW-0238">DNA-binding</keyword>
<keyword id="KW-0486">Methionine biosynthesis</keyword>
<keyword id="KW-0678">Repressor</keyword>
<keyword id="KW-0804">Transcription</keyword>
<keyword id="KW-0805">Transcription regulation</keyword>
<proteinExistence type="inferred from homology"/>
<protein>
    <recommendedName>
        <fullName evidence="1">Met repressor</fullName>
    </recommendedName>
    <alternativeName>
        <fullName evidence="1">Met regulon regulatory protein MetJ</fullName>
    </alternativeName>
</protein>
<accession>Q0I283</accession>
<name>METJ_HISS1</name>
<sequence>MADWDGKYISPYAEHGKKSEQVKKITVSIPIKVLEILTNERTRRQLRNLRHATNSELLCEAFLHAFTGQPLPTDEDLLKERHDEIPESAKQIMRELGINPDDWEY</sequence>
<feature type="chain" id="PRO_1000046492" description="Met repressor">
    <location>
        <begin position="1"/>
        <end position="105"/>
    </location>
</feature>
<reference key="1">
    <citation type="journal article" date="2007" name="J. Bacteriol.">
        <title>Complete genome sequence of Haemophilus somnus (Histophilus somni) strain 129Pt and comparison to Haemophilus ducreyi 35000HP and Haemophilus influenzae Rd.</title>
        <authorList>
            <person name="Challacombe J.F."/>
            <person name="Duncan A.J."/>
            <person name="Brettin T.S."/>
            <person name="Bruce D."/>
            <person name="Chertkov O."/>
            <person name="Detter J.C."/>
            <person name="Han C.S."/>
            <person name="Misra M."/>
            <person name="Richardson P."/>
            <person name="Tapia R."/>
            <person name="Thayer N."/>
            <person name="Xie G."/>
            <person name="Inzana T.J."/>
        </authorList>
    </citation>
    <scope>NUCLEOTIDE SEQUENCE [LARGE SCALE GENOMIC DNA]</scope>
    <source>
        <strain>129Pt</strain>
    </source>
</reference>
<comment type="function">
    <text evidence="1">This regulatory protein, when combined with SAM (S-adenosylmethionine) represses the expression of the methionine regulon and of enzymes involved in SAM synthesis.</text>
</comment>
<comment type="subunit">
    <text evidence="1">Homodimer.</text>
</comment>
<comment type="subcellular location">
    <subcellularLocation>
        <location evidence="1">Cytoplasm</location>
    </subcellularLocation>
</comment>
<comment type="domain">
    <text>Does not bind DNA by a helix-turn-helix motif.</text>
</comment>
<comment type="similarity">
    <text evidence="1">Belongs to the MetJ family.</text>
</comment>
<evidence type="ECO:0000255" key="1">
    <source>
        <dbReference type="HAMAP-Rule" id="MF_00744"/>
    </source>
</evidence>
<dbReference type="EMBL" id="CP000436">
    <property type="protein sequence ID" value="ABI24746.1"/>
    <property type="molecule type" value="Genomic_DNA"/>
</dbReference>
<dbReference type="SMR" id="Q0I283"/>
<dbReference type="KEGG" id="hso:HS_0469"/>
<dbReference type="eggNOG" id="COG3060">
    <property type="taxonomic scope" value="Bacteria"/>
</dbReference>
<dbReference type="HOGENOM" id="CLU_142318_0_0_6"/>
<dbReference type="GO" id="GO:0005737">
    <property type="term" value="C:cytoplasm"/>
    <property type="evidence" value="ECO:0007669"/>
    <property type="project" value="UniProtKB-SubCell"/>
</dbReference>
<dbReference type="GO" id="GO:0003677">
    <property type="term" value="F:DNA binding"/>
    <property type="evidence" value="ECO:0007669"/>
    <property type="project" value="UniProtKB-KW"/>
</dbReference>
<dbReference type="GO" id="GO:0003700">
    <property type="term" value="F:DNA-binding transcription factor activity"/>
    <property type="evidence" value="ECO:0007669"/>
    <property type="project" value="InterPro"/>
</dbReference>
<dbReference type="GO" id="GO:0009086">
    <property type="term" value="P:methionine biosynthetic process"/>
    <property type="evidence" value="ECO:0007669"/>
    <property type="project" value="UniProtKB-UniRule"/>
</dbReference>
<dbReference type="GO" id="GO:0045892">
    <property type="term" value="P:negative regulation of DNA-templated transcription"/>
    <property type="evidence" value="ECO:0007669"/>
    <property type="project" value="UniProtKB-UniRule"/>
</dbReference>
<dbReference type="CDD" id="cd00490">
    <property type="entry name" value="Met_repressor_MetJ"/>
    <property type="match status" value="1"/>
</dbReference>
<dbReference type="Gene3D" id="1.10.140.10">
    <property type="entry name" value="MET Apo-Repressor, subunit A"/>
    <property type="match status" value="1"/>
</dbReference>
<dbReference type="HAMAP" id="MF_00744">
    <property type="entry name" value="MetJ"/>
    <property type="match status" value="1"/>
</dbReference>
<dbReference type="InterPro" id="IPR002084">
    <property type="entry name" value="Met_repressor_MetJ"/>
</dbReference>
<dbReference type="InterPro" id="IPR023453">
    <property type="entry name" value="Met_repressor_MetJ_dom_sf"/>
</dbReference>
<dbReference type="InterPro" id="IPR010985">
    <property type="entry name" value="Ribbon_hlx_hlx"/>
</dbReference>
<dbReference type="NCBIfam" id="NF003622">
    <property type="entry name" value="PRK05264.1"/>
    <property type="match status" value="1"/>
</dbReference>
<dbReference type="Pfam" id="PF01340">
    <property type="entry name" value="MetJ"/>
    <property type="match status" value="1"/>
</dbReference>
<dbReference type="SUPFAM" id="SSF47598">
    <property type="entry name" value="Ribbon-helix-helix"/>
    <property type="match status" value="1"/>
</dbReference>
<gene>
    <name evidence="1" type="primary">metJ</name>
    <name type="ordered locus">HS_0469</name>
</gene>
<organism>
    <name type="scientific">Histophilus somni (strain 129Pt)</name>
    <name type="common">Haemophilus somnus</name>
    <dbReference type="NCBI Taxonomy" id="205914"/>
    <lineage>
        <taxon>Bacteria</taxon>
        <taxon>Pseudomonadati</taxon>
        <taxon>Pseudomonadota</taxon>
        <taxon>Gammaproteobacteria</taxon>
        <taxon>Pasteurellales</taxon>
        <taxon>Pasteurellaceae</taxon>
        <taxon>Histophilus</taxon>
    </lineage>
</organism>